<feature type="chain" id="PRO_0000082285" description="Taste receptor type 2 member 39">
    <location>
        <begin position="1"/>
        <end position="338"/>
    </location>
</feature>
<feature type="topological domain" description="Extracellular" evidence="2">
    <location>
        <begin position="1"/>
        <end position="30"/>
    </location>
</feature>
<feature type="transmembrane region" description="Helical; Name=1" evidence="2">
    <location>
        <begin position="31"/>
        <end position="51"/>
    </location>
</feature>
<feature type="topological domain" description="Cytoplasmic" evidence="2">
    <location>
        <begin position="52"/>
        <end position="74"/>
    </location>
</feature>
<feature type="transmembrane region" description="Helical; Name=2" evidence="2">
    <location>
        <begin position="75"/>
        <end position="95"/>
    </location>
</feature>
<feature type="topological domain" description="Extracellular" evidence="2">
    <location>
        <begin position="96"/>
        <end position="116"/>
    </location>
</feature>
<feature type="transmembrane region" description="Helical; Name=3" evidence="2">
    <location>
        <begin position="117"/>
        <end position="137"/>
    </location>
</feature>
<feature type="topological domain" description="Cytoplasmic" evidence="2">
    <location>
        <begin position="138"/>
        <end position="156"/>
    </location>
</feature>
<feature type="transmembrane region" description="Helical; Name=4" evidence="2">
    <location>
        <begin position="157"/>
        <end position="177"/>
    </location>
</feature>
<feature type="topological domain" description="Extracellular" evidence="2">
    <location>
        <begin position="178"/>
        <end position="205"/>
    </location>
</feature>
<feature type="transmembrane region" description="Helical; Name=5" evidence="2">
    <location>
        <begin position="206"/>
        <end position="226"/>
    </location>
</feature>
<feature type="topological domain" description="Cytoplasmic" evidence="2">
    <location>
        <begin position="227"/>
        <end position="262"/>
    </location>
</feature>
<feature type="transmembrane region" description="Helical; Name=6" evidence="2">
    <location>
        <begin position="263"/>
        <end position="283"/>
    </location>
</feature>
<feature type="topological domain" description="Extracellular" evidence="2">
    <location>
        <begin position="284"/>
        <end position="291"/>
    </location>
</feature>
<feature type="transmembrane region" description="Helical; Name=7" evidence="2">
    <location>
        <begin position="292"/>
        <end position="312"/>
    </location>
</feature>
<feature type="topological domain" description="Cytoplasmic" evidence="2">
    <location>
        <begin position="313"/>
        <end position="338"/>
    </location>
</feature>
<feature type="glycosylation site" description="N-linked (GlcNAc...) asparagine" evidence="2">
    <location>
        <position position="194"/>
    </location>
</feature>
<name>T2R39_PAPHA</name>
<comment type="function">
    <text evidence="1">Receptor that may play a role in the perception of bitterness and is gustducin-linked. May play a role in sensing the chemical composition of the gastrointestinal content. The activity of this receptor may stimulate alpha gustducin, mediate PLC-beta-2 activation and lead to the gating of TRPM5 (By similarity).</text>
</comment>
<comment type="subcellular location">
    <subcellularLocation>
        <location>Membrane</location>
        <topology>Multi-pass membrane protein</topology>
    </subcellularLocation>
</comment>
<comment type="miscellaneous">
    <text>Most taste cells may be activated by a limited number of bitter compounds; individual taste cells can discriminate among bitter stimuli.</text>
</comment>
<comment type="similarity">
    <text evidence="3">Belongs to the G-protein coupled receptor T2R family.</text>
</comment>
<reference key="1">
    <citation type="journal article" date="2005" name="Mol. Biol. Evol.">
        <title>Evolution of bitter taste receptors in humans and apes.</title>
        <authorList>
            <person name="Fischer A."/>
            <person name="Gilad Y."/>
            <person name="Man O."/>
            <person name="Paeaebo S."/>
        </authorList>
    </citation>
    <scope>NUCLEOTIDE SEQUENCE [GENOMIC DNA]</scope>
</reference>
<organism>
    <name type="scientific">Papio hamadryas</name>
    <name type="common">Hamadryas baboon</name>
    <dbReference type="NCBI Taxonomy" id="9557"/>
    <lineage>
        <taxon>Eukaryota</taxon>
        <taxon>Metazoa</taxon>
        <taxon>Chordata</taxon>
        <taxon>Craniata</taxon>
        <taxon>Vertebrata</taxon>
        <taxon>Euteleostomi</taxon>
        <taxon>Mammalia</taxon>
        <taxon>Eutheria</taxon>
        <taxon>Euarchontoglires</taxon>
        <taxon>Primates</taxon>
        <taxon>Haplorrhini</taxon>
        <taxon>Catarrhini</taxon>
        <taxon>Cercopithecidae</taxon>
        <taxon>Cercopithecinae</taxon>
        <taxon>Papio</taxon>
    </lineage>
</organism>
<proteinExistence type="inferred from homology"/>
<protein>
    <recommendedName>
        <fullName>Taste receptor type 2 member 39</fullName>
        <shortName>T2R39</shortName>
    </recommendedName>
</protein>
<accession>Q646F0</accession>
<sequence length="338" mass="38570">MLGRCFPPNTKEKQQLRMIKLCDPAESELSPFLITLTLAVLLAEYLTGIIANGFITAIHAAECVQNKSVSTSGRILVFLSVSRIALQSLMMLEITISSTSLSFYSEDTVYYAFKISFIFLNFCSLWFAAWLSFFYFVKIANFSYPLFLKLRWRISGLIPWLLWLSVFISFSHSMFCINICTGYCDNSFPIHSSNSTEKTYFSEISVVSLAFFFNLGIVIPLIMFILAAILLILSLKRHTLYMXSNATGSKDPSMEAHIGAIKATSYFLILYIFNAVALFIYLSNMFDINSLWNTLCQIIMAAYPASHSILLIKDNPGLRRAWKQLQHRLHLYPKEWTL</sequence>
<keyword id="KW-0297">G-protein coupled receptor</keyword>
<keyword id="KW-0325">Glycoprotein</keyword>
<keyword id="KW-0472">Membrane</keyword>
<keyword id="KW-0675">Receptor</keyword>
<keyword id="KW-0716">Sensory transduction</keyword>
<keyword id="KW-0919">Taste</keyword>
<keyword id="KW-0807">Transducer</keyword>
<keyword id="KW-0812">Transmembrane</keyword>
<keyword id="KW-1133">Transmembrane helix</keyword>
<dbReference type="EMBL" id="AY724834">
    <property type="protein sequence ID" value="AAU21069.1"/>
    <property type="molecule type" value="Genomic_DNA"/>
</dbReference>
<dbReference type="GlyCosmos" id="Q646F0">
    <property type="glycosylation" value="1 site, No reported glycans"/>
</dbReference>
<dbReference type="GO" id="GO:0005886">
    <property type="term" value="C:plasma membrane"/>
    <property type="evidence" value="ECO:0007669"/>
    <property type="project" value="UniProtKB-ARBA"/>
</dbReference>
<dbReference type="GO" id="GO:0033038">
    <property type="term" value="F:bitter taste receptor activity"/>
    <property type="evidence" value="ECO:0007669"/>
    <property type="project" value="InterPro"/>
</dbReference>
<dbReference type="GO" id="GO:0004930">
    <property type="term" value="F:G protein-coupled receptor activity"/>
    <property type="evidence" value="ECO:0007669"/>
    <property type="project" value="UniProtKB-KW"/>
</dbReference>
<dbReference type="FunFam" id="1.20.1070.10:FF:000055">
    <property type="entry name" value="Taste receptor type 2"/>
    <property type="match status" value="1"/>
</dbReference>
<dbReference type="Gene3D" id="1.20.1070.10">
    <property type="entry name" value="Rhodopsin 7-helix transmembrane proteins"/>
    <property type="match status" value="1"/>
</dbReference>
<dbReference type="InterPro" id="IPR007960">
    <property type="entry name" value="TAS2R"/>
</dbReference>
<dbReference type="PANTHER" id="PTHR11394">
    <property type="entry name" value="TASTE RECEPTOR TYPE 2"/>
    <property type="match status" value="1"/>
</dbReference>
<dbReference type="PANTHER" id="PTHR11394:SF142">
    <property type="entry name" value="TASTE RECEPTOR TYPE 2 MEMBER 39"/>
    <property type="match status" value="1"/>
</dbReference>
<dbReference type="Pfam" id="PF05296">
    <property type="entry name" value="TAS2R"/>
    <property type="match status" value="1"/>
</dbReference>
<dbReference type="SUPFAM" id="SSF81321">
    <property type="entry name" value="Family A G protein-coupled receptor-like"/>
    <property type="match status" value="1"/>
</dbReference>
<gene>
    <name type="primary">TAS2R39</name>
</gene>
<evidence type="ECO:0000250" key="1"/>
<evidence type="ECO:0000255" key="2"/>
<evidence type="ECO:0000305" key="3"/>